<reference key="1">
    <citation type="journal article" date="1995" name="Science">
        <title>The minimal gene complement of Mycoplasma genitalium.</title>
        <authorList>
            <person name="Fraser C.M."/>
            <person name="Gocayne J.D."/>
            <person name="White O."/>
            <person name="Adams M.D."/>
            <person name="Clayton R.A."/>
            <person name="Fleischmann R.D."/>
            <person name="Bult C.J."/>
            <person name="Kerlavage A.R."/>
            <person name="Sutton G.G."/>
            <person name="Kelley J.M."/>
            <person name="Fritchman J.L."/>
            <person name="Weidman J.F."/>
            <person name="Small K.V."/>
            <person name="Sandusky M."/>
            <person name="Fuhrmann J.L."/>
            <person name="Nguyen D.T."/>
            <person name="Utterback T.R."/>
            <person name="Saudek D.M."/>
            <person name="Phillips C.A."/>
            <person name="Merrick J.M."/>
            <person name="Tomb J.-F."/>
            <person name="Dougherty B.A."/>
            <person name="Bott K.F."/>
            <person name="Hu P.-C."/>
            <person name="Lucier T.S."/>
            <person name="Peterson S.N."/>
            <person name="Smith H.O."/>
            <person name="Hutchison C.A. III"/>
            <person name="Venter J.C."/>
        </authorList>
    </citation>
    <scope>NUCLEOTIDE SEQUENCE [LARGE SCALE GENOMIC DNA]</scope>
    <source>
        <strain>ATCC 33530 / DSM 19775 / NCTC 10195 / G37</strain>
    </source>
</reference>
<reference key="2">
    <citation type="journal article" date="1993" name="J. Bacteriol.">
        <title>A survey of the Mycoplasma genitalium genome by using random sequencing.</title>
        <authorList>
            <person name="Peterson S.N."/>
            <person name="Hu P.-C."/>
            <person name="Bott K.F."/>
            <person name="Hutchison C.A. III"/>
        </authorList>
    </citation>
    <scope>NUCLEOTIDE SEQUENCE [GENOMIC DNA] OF 91-160</scope>
    <source>
        <strain>ATCC 33530 / DSM 19775 / NCTC 10195 / G37</strain>
    </source>
</reference>
<name>Y350_MYCGE</name>
<accession>P47592</accession>
<accession>Q49205</accession>
<sequence length="311" mass="37008">MKISPDQKDKKSLFKKHFAYLKLTEKELNDPKIQTLLEVAWNHFDQCRKIKERRCSNKGDIHLQAVREWLPWEFNANQLKKNSTKETTQVSENEFMGNVMLMQTICPKLVNKANWFDLTYERFIVTKPNWFKYMDLIPMIQNLPVTPSDKNSFGYAYKKISNLFETEKKTKKRIFFFNLQKNNINNMAACMLTCEIAKKNIKVALIYCEEFVSRYDKSYWKVDDDLNLLDEAKVIIFIGLGQESFHNKNYILFMTRLFINCFLKRKDVFFFSTTYSDGNGLIQTFKNQIISSANWVKHFFEQLNDLLMINI</sequence>
<keyword id="KW-1185">Reference proteome</keyword>
<protein>
    <recommendedName>
        <fullName>Uncharacterized protein MG350</fullName>
    </recommendedName>
</protein>
<organism>
    <name type="scientific">Mycoplasma genitalium (strain ATCC 33530 / DSM 19775 / NCTC 10195 / G37)</name>
    <name type="common">Mycoplasmoides genitalium</name>
    <dbReference type="NCBI Taxonomy" id="243273"/>
    <lineage>
        <taxon>Bacteria</taxon>
        <taxon>Bacillati</taxon>
        <taxon>Mycoplasmatota</taxon>
        <taxon>Mycoplasmoidales</taxon>
        <taxon>Mycoplasmoidaceae</taxon>
        <taxon>Mycoplasmoides</taxon>
    </lineage>
</organism>
<dbReference type="EMBL" id="L43967">
    <property type="protein sequence ID" value="AAC71575.1"/>
    <property type="molecule type" value="Genomic_DNA"/>
</dbReference>
<dbReference type="EMBL" id="U01731">
    <property type="protein sequence ID" value="AAC43209.1"/>
    <property type="molecule type" value="Unassigned_DNA"/>
</dbReference>
<dbReference type="PIR" id="G64238">
    <property type="entry name" value="G64238"/>
</dbReference>
<dbReference type="RefSeq" id="WP_010869445.1">
    <property type="nucleotide sequence ID" value="NC_000908.2"/>
</dbReference>
<dbReference type="GeneID" id="88282529"/>
<dbReference type="KEGG" id="mge:MG_350"/>
<dbReference type="eggNOG" id="ENOG5031Z78">
    <property type="taxonomic scope" value="Bacteria"/>
</dbReference>
<dbReference type="HOGENOM" id="CLU_846847_0_0_14"/>
<dbReference type="InParanoid" id="P47592"/>
<dbReference type="OrthoDB" id="9965818at2"/>
<dbReference type="BioCyc" id="MGEN243273:G1GJ2-439-MONOMER"/>
<dbReference type="Proteomes" id="UP000000807">
    <property type="component" value="Chromosome"/>
</dbReference>
<gene>
    <name type="ordered locus">MG350</name>
</gene>
<evidence type="ECO:0000305" key="1"/>
<proteinExistence type="predicted"/>
<feature type="chain" id="PRO_0000210555" description="Uncharacterized protein MG350">
    <location>
        <begin position="1"/>
        <end position="311"/>
    </location>
</feature>
<feature type="sequence conflict" description="In Ref. 2; AAC43209." evidence="1" ref="2">
    <original>S</original>
    <variation>G</variation>
    <location>
        <position position="91"/>
    </location>
</feature>
<feature type="sequence conflict" description="In Ref. 2; AAC43209." evidence="1" ref="2">
    <original>KI</original>
    <variation>RY</variation>
    <location>
        <begin position="159"/>
        <end position="160"/>
    </location>
</feature>